<dbReference type="EMBL" id="CP001063">
    <property type="protein sequence ID" value="ACD10076.1"/>
    <property type="molecule type" value="Genomic_DNA"/>
</dbReference>
<dbReference type="RefSeq" id="WP_000246884.1">
    <property type="nucleotide sequence ID" value="NC_010658.1"/>
</dbReference>
<dbReference type="SMR" id="B2U311"/>
<dbReference type="STRING" id="344609.SbBS512_E0162"/>
<dbReference type="GeneID" id="93777256"/>
<dbReference type="KEGG" id="sbc:SbBS512_E0162"/>
<dbReference type="HOGENOM" id="CLU_040318_1_2_6"/>
<dbReference type="Proteomes" id="UP000001030">
    <property type="component" value="Chromosome"/>
</dbReference>
<dbReference type="GO" id="GO:0022627">
    <property type="term" value="C:cytosolic small ribosomal subunit"/>
    <property type="evidence" value="ECO:0007669"/>
    <property type="project" value="TreeGrafter"/>
</dbReference>
<dbReference type="GO" id="GO:0003735">
    <property type="term" value="F:structural constituent of ribosome"/>
    <property type="evidence" value="ECO:0007669"/>
    <property type="project" value="InterPro"/>
</dbReference>
<dbReference type="GO" id="GO:0006412">
    <property type="term" value="P:translation"/>
    <property type="evidence" value="ECO:0007669"/>
    <property type="project" value="UniProtKB-UniRule"/>
</dbReference>
<dbReference type="CDD" id="cd01425">
    <property type="entry name" value="RPS2"/>
    <property type="match status" value="1"/>
</dbReference>
<dbReference type="FunFam" id="1.10.287.610:FF:000001">
    <property type="entry name" value="30S ribosomal protein S2"/>
    <property type="match status" value="1"/>
</dbReference>
<dbReference type="Gene3D" id="3.40.50.10490">
    <property type="entry name" value="Glucose-6-phosphate isomerase like protein, domain 1"/>
    <property type="match status" value="1"/>
</dbReference>
<dbReference type="Gene3D" id="1.10.287.610">
    <property type="entry name" value="Helix hairpin bin"/>
    <property type="match status" value="1"/>
</dbReference>
<dbReference type="HAMAP" id="MF_00291_B">
    <property type="entry name" value="Ribosomal_uS2_B"/>
    <property type="match status" value="1"/>
</dbReference>
<dbReference type="InterPro" id="IPR001865">
    <property type="entry name" value="Ribosomal_uS2"/>
</dbReference>
<dbReference type="InterPro" id="IPR005706">
    <property type="entry name" value="Ribosomal_uS2_bac/mit/plastid"/>
</dbReference>
<dbReference type="InterPro" id="IPR018130">
    <property type="entry name" value="Ribosomal_uS2_CS"/>
</dbReference>
<dbReference type="InterPro" id="IPR023591">
    <property type="entry name" value="Ribosomal_uS2_flav_dom_sf"/>
</dbReference>
<dbReference type="NCBIfam" id="TIGR01011">
    <property type="entry name" value="rpsB_bact"/>
    <property type="match status" value="1"/>
</dbReference>
<dbReference type="PANTHER" id="PTHR12534">
    <property type="entry name" value="30S RIBOSOMAL PROTEIN S2 PROKARYOTIC AND ORGANELLAR"/>
    <property type="match status" value="1"/>
</dbReference>
<dbReference type="PANTHER" id="PTHR12534:SF0">
    <property type="entry name" value="SMALL RIBOSOMAL SUBUNIT PROTEIN US2M"/>
    <property type="match status" value="1"/>
</dbReference>
<dbReference type="Pfam" id="PF00318">
    <property type="entry name" value="Ribosomal_S2"/>
    <property type="match status" value="1"/>
</dbReference>
<dbReference type="PRINTS" id="PR00395">
    <property type="entry name" value="RIBOSOMALS2"/>
</dbReference>
<dbReference type="SUPFAM" id="SSF52313">
    <property type="entry name" value="Ribosomal protein S2"/>
    <property type="match status" value="1"/>
</dbReference>
<dbReference type="PROSITE" id="PS00962">
    <property type="entry name" value="RIBOSOMAL_S2_1"/>
    <property type="match status" value="1"/>
</dbReference>
<dbReference type="PROSITE" id="PS00963">
    <property type="entry name" value="RIBOSOMAL_S2_2"/>
    <property type="match status" value="1"/>
</dbReference>
<proteinExistence type="inferred from homology"/>
<organism>
    <name type="scientific">Shigella boydii serotype 18 (strain CDC 3083-94 / BS512)</name>
    <dbReference type="NCBI Taxonomy" id="344609"/>
    <lineage>
        <taxon>Bacteria</taxon>
        <taxon>Pseudomonadati</taxon>
        <taxon>Pseudomonadota</taxon>
        <taxon>Gammaproteobacteria</taxon>
        <taxon>Enterobacterales</taxon>
        <taxon>Enterobacteriaceae</taxon>
        <taxon>Shigella</taxon>
    </lineage>
</organism>
<keyword id="KW-1185">Reference proteome</keyword>
<keyword id="KW-0687">Ribonucleoprotein</keyword>
<keyword id="KW-0689">Ribosomal protein</keyword>
<gene>
    <name evidence="1" type="primary">rpsB</name>
    <name type="ordered locus">SbBS512_E0162</name>
</gene>
<reference key="1">
    <citation type="submission" date="2008-05" db="EMBL/GenBank/DDBJ databases">
        <title>Complete sequence of Shigella boydii serotype 18 strain BS512.</title>
        <authorList>
            <person name="Rasko D.A."/>
            <person name="Rosovitz M."/>
            <person name="Maurelli A.T."/>
            <person name="Myers G."/>
            <person name="Seshadri R."/>
            <person name="Cer R."/>
            <person name="Jiang L."/>
            <person name="Ravel J."/>
            <person name="Sebastian Y."/>
        </authorList>
    </citation>
    <scope>NUCLEOTIDE SEQUENCE [LARGE SCALE GENOMIC DNA]</scope>
    <source>
        <strain>CDC 3083-94 / BS512</strain>
    </source>
</reference>
<comment type="similarity">
    <text evidence="1">Belongs to the universal ribosomal protein uS2 family.</text>
</comment>
<accession>B2U311</accession>
<name>RS2_SHIB3</name>
<sequence>MATVSMRDMLKAGVHFGHQTRYWNPKMKPFIFGARNKVHIINLEKTVPMFNEALAELNKIASRKGKILFVGTKRAASEAVKDAALSCDQFFVNHRWLGGMLTNWKTVRQSIKRLKDLETQSQDGTFEKLTKKEALMRTRELEKLENSLGGIKDMGGLPDALFVIDADHEHIAIKEANNLGIPVFAIVDTNSDPDGVDFVIPGNDDAIRAVTLYLGAVAATVREGRSQDLASQAEESFVEAE</sequence>
<evidence type="ECO:0000255" key="1">
    <source>
        <dbReference type="HAMAP-Rule" id="MF_00291"/>
    </source>
</evidence>
<evidence type="ECO:0000305" key="2"/>
<feature type="chain" id="PRO_1000115059" description="Small ribosomal subunit protein uS2">
    <location>
        <begin position="1"/>
        <end position="241"/>
    </location>
</feature>
<protein>
    <recommendedName>
        <fullName evidence="1">Small ribosomal subunit protein uS2</fullName>
    </recommendedName>
    <alternativeName>
        <fullName evidence="2">30S ribosomal protein S2</fullName>
    </alternativeName>
</protein>